<dbReference type="EC" id="3.4.21.-"/>
<dbReference type="EMBL" id="AP009351">
    <property type="protein sequence ID" value="BAF67975.1"/>
    <property type="molecule type" value="Genomic_DNA"/>
</dbReference>
<dbReference type="RefSeq" id="WP_001038704.1">
    <property type="nucleotide sequence ID" value="NZ_JBBIAE010000013.1"/>
</dbReference>
<dbReference type="SMR" id="A6QHZ3"/>
<dbReference type="MEROPS" id="S01.526"/>
<dbReference type="KEGG" id="sae:NWMN_1703"/>
<dbReference type="HOGENOM" id="CLU_073589_2_0_9"/>
<dbReference type="Proteomes" id="UP000006386">
    <property type="component" value="Chromosome"/>
</dbReference>
<dbReference type="GO" id="GO:0005576">
    <property type="term" value="C:extracellular region"/>
    <property type="evidence" value="ECO:0007669"/>
    <property type="project" value="UniProtKB-SubCell"/>
</dbReference>
<dbReference type="GO" id="GO:0008236">
    <property type="term" value="F:serine-type peptidase activity"/>
    <property type="evidence" value="ECO:0007669"/>
    <property type="project" value="UniProtKB-KW"/>
</dbReference>
<dbReference type="GO" id="GO:0006508">
    <property type="term" value="P:proteolysis"/>
    <property type="evidence" value="ECO:0007669"/>
    <property type="project" value="UniProtKB-KW"/>
</dbReference>
<dbReference type="Gene3D" id="2.40.10.10">
    <property type="entry name" value="Trypsin-like serine proteases"/>
    <property type="match status" value="2"/>
</dbReference>
<dbReference type="InterPro" id="IPR009003">
    <property type="entry name" value="Peptidase_S1_PA"/>
</dbReference>
<dbReference type="InterPro" id="IPR043504">
    <property type="entry name" value="Peptidase_S1_PA_chymotrypsin"/>
</dbReference>
<dbReference type="InterPro" id="IPR008256">
    <property type="entry name" value="Peptidase_S1B"/>
</dbReference>
<dbReference type="InterPro" id="IPR028301">
    <property type="entry name" value="V8_his_AS"/>
</dbReference>
<dbReference type="PANTHER" id="PTHR43019:SF23">
    <property type="entry name" value="PROTEASE DO-LIKE 5, CHLOROPLASTIC"/>
    <property type="match status" value="1"/>
</dbReference>
<dbReference type="PANTHER" id="PTHR43019">
    <property type="entry name" value="SERINE ENDOPROTEASE DEGS"/>
    <property type="match status" value="1"/>
</dbReference>
<dbReference type="Pfam" id="PF13365">
    <property type="entry name" value="Trypsin_2"/>
    <property type="match status" value="1"/>
</dbReference>
<dbReference type="PRINTS" id="PR00839">
    <property type="entry name" value="V8PROTEASE"/>
</dbReference>
<dbReference type="SUPFAM" id="SSF50494">
    <property type="entry name" value="Trypsin-like serine proteases"/>
    <property type="match status" value="1"/>
</dbReference>
<dbReference type="PROSITE" id="PS00672">
    <property type="entry name" value="V8_HIS"/>
    <property type="match status" value="1"/>
</dbReference>
<reference key="1">
    <citation type="journal article" date="2008" name="J. Bacteriol.">
        <title>Genome sequence of Staphylococcus aureus strain Newman and comparative analysis of staphylococcal genomes: polymorphism and evolution of two major pathogenicity islands.</title>
        <authorList>
            <person name="Baba T."/>
            <person name="Bae T."/>
            <person name="Schneewind O."/>
            <person name="Takeuchi F."/>
            <person name="Hiramatsu K."/>
        </authorList>
    </citation>
    <scope>NUCLEOTIDE SEQUENCE [LARGE SCALE GENOMIC DNA]</scope>
    <source>
        <strain>Newman</strain>
    </source>
</reference>
<sequence>MNKNIIIKSIAALTILTSITGVGTTVVDGIQQTAKAENSVKLITNTNVAPYSGVTWMGAGTGFVVGNHTIITNKHVTYHMKVGDEIKAHPNGFYNNGGGLYKVTKIVDYPGKEDIAVVQVEEKSTQPKGRKFKDFTSKFNIASEAKENEPISVIGYPNPNGNKLQMYESTGKVLSVNGNIVTSDAVVQPGSSGSPILNSKREAIGVMYASDKPTGESTRSFAVYFSPEIKKFIADNLDK</sequence>
<protein>
    <recommendedName>
        <fullName>Serine protease SplD</fullName>
        <ecNumber>3.4.21.-</ecNumber>
    </recommendedName>
</protein>
<feature type="signal peptide" evidence="2">
    <location>
        <begin position="1"/>
        <end position="36"/>
    </location>
</feature>
<feature type="chain" id="PRO_0000359569" description="Serine protease SplD">
    <location>
        <begin position="37"/>
        <end position="239"/>
    </location>
</feature>
<feature type="active site" description="Charge relay system" evidence="1">
    <location>
        <position position="75"/>
    </location>
</feature>
<feature type="active site" description="Charge relay system" evidence="1">
    <location>
        <position position="114"/>
    </location>
</feature>
<feature type="active site" description="Charge relay system" evidence="1">
    <location>
        <position position="192"/>
    </location>
</feature>
<proteinExistence type="inferred from homology"/>
<accession>A6QHZ3</accession>
<name>SPLD_STAAE</name>
<gene>
    <name type="primary">splD</name>
    <name type="ordered locus">NWMN_1703</name>
</gene>
<evidence type="ECO:0000250" key="1"/>
<evidence type="ECO:0000255" key="2"/>
<evidence type="ECO:0000305" key="3"/>
<comment type="subcellular location">
    <subcellularLocation>
        <location evidence="1">Secreted</location>
    </subcellularLocation>
</comment>
<comment type="similarity">
    <text evidence="3">Belongs to the peptidase S1B family.</text>
</comment>
<organism>
    <name type="scientific">Staphylococcus aureus (strain Newman)</name>
    <dbReference type="NCBI Taxonomy" id="426430"/>
    <lineage>
        <taxon>Bacteria</taxon>
        <taxon>Bacillati</taxon>
        <taxon>Bacillota</taxon>
        <taxon>Bacilli</taxon>
        <taxon>Bacillales</taxon>
        <taxon>Staphylococcaceae</taxon>
        <taxon>Staphylococcus</taxon>
    </lineage>
</organism>
<keyword id="KW-0378">Hydrolase</keyword>
<keyword id="KW-0645">Protease</keyword>
<keyword id="KW-0964">Secreted</keyword>
<keyword id="KW-0720">Serine protease</keyword>
<keyword id="KW-0732">Signal</keyword>